<name>DYR_BOVIN</name>
<dbReference type="EC" id="1.5.1.3"/>
<dbReference type="EMBL" id="BC114162">
    <property type="protein sequence ID" value="AAI14163.1"/>
    <property type="molecule type" value="mRNA"/>
</dbReference>
<dbReference type="PIR" id="A00388">
    <property type="entry name" value="RDBOD"/>
</dbReference>
<dbReference type="RefSeq" id="NP_001071351.1">
    <property type="nucleotide sequence ID" value="NM_001077883.1"/>
</dbReference>
<dbReference type="SMR" id="P00376"/>
<dbReference type="FunCoup" id="P00376">
    <property type="interactions" value="714"/>
</dbReference>
<dbReference type="STRING" id="9913.ENSBTAP00000010103"/>
<dbReference type="BindingDB" id="P00376"/>
<dbReference type="ChEMBL" id="CHEMBL1075051"/>
<dbReference type="DrugCentral" id="P00376"/>
<dbReference type="PaxDb" id="9913-ENSBTAP00000010103"/>
<dbReference type="PeptideAtlas" id="P00376"/>
<dbReference type="GeneID" id="508809"/>
<dbReference type="KEGG" id="bta:508809"/>
<dbReference type="CTD" id="1719"/>
<dbReference type="eggNOG" id="KOG1324">
    <property type="taxonomic scope" value="Eukaryota"/>
</dbReference>
<dbReference type="HOGENOM" id="CLU_043966_2_3_1"/>
<dbReference type="InParanoid" id="P00376"/>
<dbReference type="OrthoDB" id="4664297at2759"/>
<dbReference type="TreeFam" id="TF317636"/>
<dbReference type="SABIO-RK" id="P00376"/>
<dbReference type="UniPathway" id="UPA00077">
    <property type="reaction ID" value="UER00158"/>
</dbReference>
<dbReference type="PRO" id="PR:P00376"/>
<dbReference type="Proteomes" id="UP000009136">
    <property type="component" value="Unplaced"/>
</dbReference>
<dbReference type="GO" id="GO:0005737">
    <property type="term" value="C:cytoplasm"/>
    <property type="evidence" value="ECO:0000250"/>
    <property type="project" value="UniProtKB"/>
</dbReference>
<dbReference type="GO" id="GO:0005739">
    <property type="term" value="C:mitochondrion"/>
    <property type="evidence" value="ECO:0000250"/>
    <property type="project" value="UniProtKB"/>
</dbReference>
<dbReference type="GO" id="GO:0004146">
    <property type="term" value="F:dihydrofolate reductase activity"/>
    <property type="evidence" value="ECO:0000250"/>
    <property type="project" value="UniProtKB"/>
</dbReference>
<dbReference type="GO" id="GO:0003729">
    <property type="term" value="F:mRNA binding"/>
    <property type="evidence" value="ECO:0000250"/>
    <property type="project" value="UniProtKB"/>
</dbReference>
<dbReference type="GO" id="GO:0050661">
    <property type="term" value="F:NADP binding"/>
    <property type="evidence" value="ECO:0000318"/>
    <property type="project" value="GO_Central"/>
</dbReference>
<dbReference type="GO" id="GO:0046452">
    <property type="term" value="P:dihydrofolate metabolic process"/>
    <property type="evidence" value="ECO:0000318"/>
    <property type="project" value="GO_Central"/>
</dbReference>
<dbReference type="GO" id="GO:0046655">
    <property type="term" value="P:folic acid metabolic process"/>
    <property type="evidence" value="ECO:0000318"/>
    <property type="project" value="GO_Central"/>
</dbReference>
<dbReference type="GO" id="GO:0006730">
    <property type="term" value="P:one-carbon metabolic process"/>
    <property type="evidence" value="ECO:0007669"/>
    <property type="project" value="UniProtKB-KW"/>
</dbReference>
<dbReference type="GO" id="GO:0031427">
    <property type="term" value="P:response to methotrexate"/>
    <property type="evidence" value="ECO:0007669"/>
    <property type="project" value="UniProtKB-KW"/>
</dbReference>
<dbReference type="GO" id="GO:0046654">
    <property type="term" value="P:tetrahydrofolate biosynthetic process"/>
    <property type="evidence" value="ECO:0000318"/>
    <property type="project" value="GO_Central"/>
</dbReference>
<dbReference type="GO" id="GO:0046653">
    <property type="term" value="P:tetrahydrofolate metabolic process"/>
    <property type="evidence" value="ECO:0000250"/>
    <property type="project" value="UniProtKB"/>
</dbReference>
<dbReference type="CDD" id="cd00209">
    <property type="entry name" value="DHFR"/>
    <property type="match status" value="1"/>
</dbReference>
<dbReference type="FunFam" id="3.40.430.10:FF:000002">
    <property type="entry name" value="Dihydrofolate reductase"/>
    <property type="match status" value="1"/>
</dbReference>
<dbReference type="Gene3D" id="3.40.430.10">
    <property type="entry name" value="Dihydrofolate Reductase, subunit A"/>
    <property type="match status" value="1"/>
</dbReference>
<dbReference type="InterPro" id="IPR012259">
    <property type="entry name" value="DHFR"/>
</dbReference>
<dbReference type="InterPro" id="IPR024072">
    <property type="entry name" value="DHFR-like_dom_sf"/>
</dbReference>
<dbReference type="InterPro" id="IPR017925">
    <property type="entry name" value="DHFR_CS"/>
</dbReference>
<dbReference type="InterPro" id="IPR001796">
    <property type="entry name" value="DHFR_dom"/>
</dbReference>
<dbReference type="PANTHER" id="PTHR48069">
    <property type="entry name" value="DIHYDROFOLATE REDUCTASE"/>
    <property type="match status" value="1"/>
</dbReference>
<dbReference type="PANTHER" id="PTHR48069:SF6">
    <property type="entry name" value="DIHYDROFOLATE REDUCTASE"/>
    <property type="match status" value="1"/>
</dbReference>
<dbReference type="Pfam" id="PF00186">
    <property type="entry name" value="DHFR_1"/>
    <property type="match status" value="1"/>
</dbReference>
<dbReference type="PRINTS" id="PR00070">
    <property type="entry name" value="DHFR"/>
</dbReference>
<dbReference type="SUPFAM" id="SSF53597">
    <property type="entry name" value="Dihydrofolate reductase-like"/>
    <property type="match status" value="1"/>
</dbReference>
<dbReference type="PROSITE" id="PS00075">
    <property type="entry name" value="DHFR_1"/>
    <property type="match status" value="1"/>
</dbReference>
<dbReference type="PROSITE" id="PS51330">
    <property type="entry name" value="DHFR_2"/>
    <property type="match status" value="1"/>
</dbReference>
<protein>
    <recommendedName>
        <fullName>Dihydrofolate reductase</fullName>
        <ecNumber>1.5.1.3</ecNumber>
    </recommendedName>
</protein>
<organism>
    <name type="scientific">Bos taurus</name>
    <name type="common">Bovine</name>
    <dbReference type="NCBI Taxonomy" id="9913"/>
    <lineage>
        <taxon>Eukaryota</taxon>
        <taxon>Metazoa</taxon>
        <taxon>Chordata</taxon>
        <taxon>Craniata</taxon>
        <taxon>Vertebrata</taxon>
        <taxon>Euteleostomi</taxon>
        <taxon>Mammalia</taxon>
        <taxon>Eutheria</taxon>
        <taxon>Laurasiatheria</taxon>
        <taxon>Artiodactyla</taxon>
        <taxon>Ruminantia</taxon>
        <taxon>Pecora</taxon>
        <taxon>Bovidae</taxon>
        <taxon>Bovinae</taxon>
        <taxon>Bos</taxon>
    </lineage>
</organism>
<proteinExistence type="evidence at protein level"/>
<comment type="function">
    <text evidence="1">Key enzyme in folate metabolism. Contributes to the de novo mitochondrial thymidylate biosynthesis pathway. Catalyzes an essential reaction for de novo glycine and purine synthesis, and for DNA precursor synthesis. Binds its own mRNA and that of DHFR2 (By similarity).</text>
</comment>
<comment type="catalytic activity">
    <reaction evidence="2 3">
        <text>(6S)-5,6,7,8-tetrahydrofolate + NADP(+) = 7,8-dihydrofolate + NADPH + H(+)</text>
        <dbReference type="Rhea" id="RHEA:15009"/>
        <dbReference type="ChEBI" id="CHEBI:15378"/>
        <dbReference type="ChEBI" id="CHEBI:57451"/>
        <dbReference type="ChEBI" id="CHEBI:57453"/>
        <dbReference type="ChEBI" id="CHEBI:57783"/>
        <dbReference type="ChEBI" id="CHEBI:58349"/>
        <dbReference type="EC" id="1.5.1.3"/>
    </reaction>
</comment>
<comment type="pathway">
    <text>Cofactor biosynthesis; tetrahydrofolate biosynthesis; 5,6,7,8-tetrahydrofolate from 7,8-dihydrofolate: step 1/1.</text>
</comment>
<comment type="subunit">
    <text evidence="1">Homodimer.</text>
</comment>
<comment type="subcellular location">
    <subcellularLocation>
        <location evidence="2">Mitochondrion</location>
    </subcellularLocation>
    <subcellularLocation>
        <location evidence="2">Cytoplasm</location>
    </subcellularLocation>
</comment>
<comment type="similarity">
    <text evidence="5">Belongs to the dihydrofolate reductase family.</text>
</comment>
<gene>
    <name type="primary">DHFR</name>
</gene>
<accession>P00376</accession>
<accession>Q29RI1</accession>
<evidence type="ECO:0000250" key="1">
    <source>
        <dbReference type="UniProtKB" id="P00374"/>
    </source>
</evidence>
<evidence type="ECO:0000250" key="2">
    <source>
        <dbReference type="UniProtKB" id="P00375"/>
    </source>
</evidence>
<evidence type="ECO:0000255" key="3">
    <source>
        <dbReference type="PROSITE-ProRule" id="PRU00660"/>
    </source>
</evidence>
<evidence type="ECO:0000269" key="4">
    <source>
    </source>
</evidence>
<evidence type="ECO:0000305" key="5"/>
<sequence length="187" mass="21604">MVRPLNCIVAVSQNMGIGKNGDLPWPPLRNEFQYFQRMTTVSSVEGKQNLVIMGRKTWFSIPEKNRPLKDRINIVLSRELKEPPKGAHFLAKSLDDALELIEDPELTNKVDVVWIVGGSSVYKEAMNKPGHVRLFVTRIMQEFESDAFFPEIDFEKYKLLPEYPGVPLDVQEEKGIKYKFEVYEKNN</sequence>
<reference key="1">
    <citation type="submission" date="2006-02" db="EMBL/GenBank/DDBJ databases">
        <authorList>
            <consortium name="NIH - Mammalian Gene Collection (MGC) project"/>
        </authorList>
    </citation>
    <scope>NUCLEOTIDE SEQUENCE [LARGE SCALE MRNA]</scope>
    <source>
        <strain>Hereford</strain>
        <tissue>Heart ventricle</tissue>
    </source>
</reference>
<reference key="2">
    <citation type="journal article" date="1982" name="Biochemistry">
        <title>Structure of dihydrofolate reductase: primary sequence of the bovine liver enzyme.</title>
        <authorList>
            <person name="Lai P.-H."/>
            <person name="Pan Y.-C.E."/>
            <person name="Gleisner J.M."/>
            <person name="Peterson D.L."/>
            <person name="Williams K.R."/>
            <person name="Blakley R.L."/>
        </authorList>
    </citation>
    <scope>PROTEIN SEQUENCE OF 2-187</scope>
    <source>
        <tissue>Liver</tissue>
    </source>
</reference>
<feature type="initiator methionine" description="Removed" evidence="4">
    <location>
        <position position="1"/>
    </location>
</feature>
<feature type="chain" id="PRO_0000186361" description="Dihydrofolate reductase">
    <location>
        <begin position="2"/>
        <end position="187"/>
    </location>
</feature>
<feature type="domain" description="DHFR" evidence="3">
    <location>
        <begin position="4"/>
        <end position="185"/>
    </location>
</feature>
<feature type="binding site" evidence="1">
    <location>
        <position position="10"/>
    </location>
    <ligand>
        <name>NADP(+)</name>
        <dbReference type="ChEBI" id="CHEBI:58349"/>
    </ligand>
</feature>
<feature type="binding site" evidence="1">
    <location>
        <begin position="16"/>
        <end position="22"/>
    </location>
    <ligand>
        <name>NADP(+)</name>
        <dbReference type="ChEBI" id="CHEBI:58349"/>
    </ligand>
</feature>
<feature type="binding site" evidence="1">
    <location>
        <begin position="31"/>
        <end position="36"/>
    </location>
    <ligand>
        <name>substrate</name>
    </ligand>
</feature>
<feature type="binding site" evidence="1">
    <location>
        <begin position="55"/>
        <end position="57"/>
    </location>
    <ligand>
        <name>NADP(+)</name>
        <dbReference type="ChEBI" id="CHEBI:58349"/>
    </ligand>
</feature>
<feature type="binding site" evidence="1">
    <location>
        <position position="71"/>
    </location>
    <ligand>
        <name>substrate</name>
    </ligand>
</feature>
<feature type="binding site" evidence="1">
    <location>
        <begin position="77"/>
        <end position="79"/>
    </location>
    <ligand>
        <name>NADP(+)</name>
        <dbReference type="ChEBI" id="CHEBI:58349"/>
    </ligand>
</feature>
<feature type="binding site" evidence="1">
    <location>
        <begin position="117"/>
        <end position="124"/>
    </location>
    <ligand>
        <name>NADP(+)</name>
        <dbReference type="ChEBI" id="CHEBI:58349"/>
    </ligand>
</feature>
<feature type="sequence conflict" description="In Ref. 1; AAI14163." evidence="5" ref="1">
    <original>D</original>
    <variation>N</variation>
    <location>
        <position position="22"/>
    </location>
</feature>
<feature type="sequence conflict" description="In Ref. 2; AA sequence." evidence="5" ref="2">
    <original>E</original>
    <variation>Q</variation>
    <location>
        <position position="102"/>
    </location>
</feature>
<keyword id="KW-0963">Cytoplasm</keyword>
<keyword id="KW-0903">Direct protein sequencing</keyword>
<keyword id="KW-0487">Methotrexate resistance</keyword>
<keyword id="KW-0496">Mitochondrion</keyword>
<keyword id="KW-0521">NADP</keyword>
<keyword id="KW-0554">One-carbon metabolism</keyword>
<keyword id="KW-0560">Oxidoreductase</keyword>
<keyword id="KW-1185">Reference proteome</keyword>
<keyword id="KW-0694">RNA-binding</keyword>